<feature type="chain" id="PRO_0000175210" description="Coproporphyrin III ferrochelatase">
    <location>
        <begin position="1"/>
        <end position="375"/>
    </location>
</feature>
<feature type="binding site" evidence="1">
    <location>
        <position position="59"/>
    </location>
    <ligand>
        <name>Fe-coproporphyrin III</name>
        <dbReference type="ChEBI" id="CHEBI:68438"/>
    </ligand>
</feature>
<feature type="binding site" evidence="1">
    <location>
        <position position="128"/>
    </location>
    <ligand>
        <name>Fe-coproporphyrin III</name>
        <dbReference type="ChEBI" id="CHEBI:68438"/>
    </ligand>
</feature>
<feature type="binding site" evidence="1">
    <location>
        <position position="191"/>
    </location>
    <ligand>
        <name>Fe(2+)</name>
        <dbReference type="ChEBI" id="CHEBI:29033"/>
    </ligand>
</feature>
<feature type="binding site" evidence="1">
    <location>
        <position position="286"/>
    </location>
    <ligand>
        <name>Fe(2+)</name>
        <dbReference type="ChEBI" id="CHEBI:29033"/>
    </ligand>
</feature>
<dbReference type="EC" id="4.99.1.9" evidence="1"/>
<dbReference type="EMBL" id="AL939125">
    <property type="protein sequence ID" value="CAA15816.1"/>
    <property type="molecule type" value="Genomic_DNA"/>
</dbReference>
<dbReference type="PIR" id="T35895">
    <property type="entry name" value="T35895"/>
</dbReference>
<dbReference type="RefSeq" id="NP_629982.1">
    <property type="nucleotide sequence ID" value="NC_003888.3"/>
</dbReference>
<dbReference type="RefSeq" id="WP_003973161.1">
    <property type="nucleotide sequence ID" value="NZ_VNID01000007.1"/>
</dbReference>
<dbReference type="SMR" id="O50533"/>
<dbReference type="FunCoup" id="O50533">
    <property type="interactions" value="504"/>
</dbReference>
<dbReference type="STRING" id="100226.gene:17763519"/>
<dbReference type="PaxDb" id="100226-SCO5859"/>
<dbReference type="KEGG" id="sco:SCO5859"/>
<dbReference type="PATRIC" id="fig|100226.15.peg.5958"/>
<dbReference type="eggNOG" id="COG0276">
    <property type="taxonomic scope" value="Bacteria"/>
</dbReference>
<dbReference type="HOGENOM" id="CLU_018884_2_0_11"/>
<dbReference type="InParanoid" id="O50533"/>
<dbReference type="OrthoDB" id="9776380at2"/>
<dbReference type="PhylomeDB" id="O50533"/>
<dbReference type="UniPathway" id="UPA00252"/>
<dbReference type="Proteomes" id="UP000001973">
    <property type="component" value="Chromosome"/>
</dbReference>
<dbReference type="GO" id="GO:0005737">
    <property type="term" value="C:cytoplasm"/>
    <property type="evidence" value="ECO:0007669"/>
    <property type="project" value="UniProtKB-SubCell"/>
</dbReference>
<dbReference type="GO" id="GO:0004325">
    <property type="term" value="F:ferrochelatase activity"/>
    <property type="evidence" value="ECO:0000318"/>
    <property type="project" value="GO_Central"/>
</dbReference>
<dbReference type="GO" id="GO:0046872">
    <property type="term" value="F:metal ion binding"/>
    <property type="evidence" value="ECO:0007669"/>
    <property type="project" value="UniProtKB-KW"/>
</dbReference>
<dbReference type="GO" id="GO:0006783">
    <property type="term" value="P:heme biosynthetic process"/>
    <property type="evidence" value="ECO:0000318"/>
    <property type="project" value="GO_Central"/>
</dbReference>
<dbReference type="CDD" id="cd00419">
    <property type="entry name" value="Ferrochelatase_C"/>
    <property type="match status" value="1"/>
</dbReference>
<dbReference type="CDD" id="cd03411">
    <property type="entry name" value="Ferrochelatase_N"/>
    <property type="match status" value="1"/>
</dbReference>
<dbReference type="FunFam" id="3.40.50.1400:FF:000008">
    <property type="entry name" value="Ferrochelatase"/>
    <property type="match status" value="1"/>
</dbReference>
<dbReference type="Gene3D" id="3.40.50.1400">
    <property type="match status" value="2"/>
</dbReference>
<dbReference type="HAMAP" id="MF_00323">
    <property type="entry name" value="Ferrochelatase"/>
    <property type="match status" value="1"/>
</dbReference>
<dbReference type="InterPro" id="IPR001015">
    <property type="entry name" value="Ferrochelatase"/>
</dbReference>
<dbReference type="InterPro" id="IPR033644">
    <property type="entry name" value="Ferrochelatase_C"/>
</dbReference>
<dbReference type="InterPro" id="IPR033659">
    <property type="entry name" value="Ferrochelatase_N"/>
</dbReference>
<dbReference type="NCBIfam" id="TIGR00109">
    <property type="entry name" value="hemH"/>
    <property type="match status" value="1"/>
</dbReference>
<dbReference type="NCBIfam" id="NF000689">
    <property type="entry name" value="PRK00035.2-1"/>
    <property type="match status" value="1"/>
</dbReference>
<dbReference type="PANTHER" id="PTHR11108">
    <property type="entry name" value="FERROCHELATASE"/>
    <property type="match status" value="1"/>
</dbReference>
<dbReference type="PANTHER" id="PTHR11108:SF1">
    <property type="entry name" value="FERROCHELATASE, MITOCHONDRIAL"/>
    <property type="match status" value="1"/>
</dbReference>
<dbReference type="Pfam" id="PF00762">
    <property type="entry name" value="Ferrochelatase"/>
    <property type="match status" value="1"/>
</dbReference>
<dbReference type="SUPFAM" id="SSF53800">
    <property type="entry name" value="Chelatase"/>
    <property type="match status" value="1"/>
</dbReference>
<reference key="1">
    <citation type="journal article" date="2002" name="Nature">
        <title>Complete genome sequence of the model actinomycete Streptomyces coelicolor A3(2).</title>
        <authorList>
            <person name="Bentley S.D."/>
            <person name="Chater K.F."/>
            <person name="Cerdeno-Tarraga A.-M."/>
            <person name="Challis G.L."/>
            <person name="Thomson N.R."/>
            <person name="James K.D."/>
            <person name="Harris D.E."/>
            <person name="Quail M.A."/>
            <person name="Kieser H."/>
            <person name="Harper D."/>
            <person name="Bateman A."/>
            <person name="Brown S."/>
            <person name="Chandra G."/>
            <person name="Chen C.W."/>
            <person name="Collins M."/>
            <person name="Cronin A."/>
            <person name="Fraser A."/>
            <person name="Goble A."/>
            <person name="Hidalgo J."/>
            <person name="Hornsby T."/>
            <person name="Howarth S."/>
            <person name="Huang C.-H."/>
            <person name="Kieser T."/>
            <person name="Larke L."/>
            <person name="Murphy L.D."/>
            <person name="Oliver K."/>
            <person name="O'Neil S."/>
            <person name="Rabbinowitsch E."/>
            <person name="Rajandream M.A."/>
            <person name="Rutherford K.M."/>
            <person name="Rutter S."/>
            <person name="Seeger K."/>
            <person name="Saunders D."/>
            <person name="Sharp S."/>
            <person name="Squares R."/>
            <person name="Squares S."/>
            <person name="Taylor K."/>
            <person name="Warren T."/>
            <person name="Wietzorrek A."/>
            <person name="Woodward J.R."/>
            <person name="Barrell B.G."/>
            <person name="Parkhill J."/>
            <person name="Hopwood D.A."/>
        </authorList>
    </citation>
    <scope>NUCLEOTIDE SEQUENCE [LARGE SCALE GENOMIC DNA]</scope>
    <source>
        <strain>ATCC BAA-471 / A3(2) / M145</strain>
    </source>
</reference>
<name>CPFC_STRCO</name>
<organism>
    <name type="scientific">Streptomyces coelicolor (strain ATCC BAA-471 / A3(2) / M145)</name>
    <dbReference type="NCBI Taxonomy" id="100226"/>
    <lineage>
        <taxon>Bacteria</taxon>
        <taxon>Bacillati</taxon>
        <taxon>Actinomycetota</taxon>
        <taxon>Actinomycetes</taxon>
        <taxon>Kitasatosporales</taxon>
        <taxon>Streptomycetaceae</taxon>
        <taxon>Streptomyces</taxon>
        <taxon>Streptomyces albidoflavus group</taxon>
    </lineage>
</organism>
<accession>O50533</accession>
<sequence length="375" mass="40622">MPDVLDASPYDALLLLSFGGPEGPDDVVPFLENVTRGRGIPKERLKEVGQHYFLFGGVSPINDQNRALLDALRKDFAEHGLDLPVYWGNRNWAPYLTDTLREMVGDGRRRILVLATSAYASYSGCRQYRENLADALAALESEGLELPKIDKLRHYFNHPGFVEPMVDGVVRSLAELPAEVRDGAHIAFCTHSIPTSAADGSGPVEEHGDGGAYVRQHLDVARLIADAVRERTGVDHPWQLVYQSRSGAPHIPWLEPDICDHLEERQAAGVPAVVMAPIGFVSDHMEVLYDLDTEATAKAEELGLPVRRSATVGADPRFAAAVRDLVLERAGDERGQEVTPCALGTLGASHNLCPVGCCPARAPRPAAAGADSPYA</sequence>
<proteinExistence type="inferred from homology"/>
<protein>
    <recommendedName>
        <fullName evidence="1">Coproporphyrin III ferrochelatase</fullName>
        <ecNumber evidence="1">4.99.1.9</ecNumber>
    </recommendedName>
</protein>
<gene>
    <name evidence="1" type="primary">cpfC</name>
    <name type="synonym">hemH</name>
    <name type="ordered locus">SCO5859</name>
    <name type="ORF">SC9B10.26</name>
</gene>
<keyword id="KW-0963">Cytoplasm</keyword>
<keyword id="KW-0350">Heme biosynthesis</keyword>
<keyword id="KW-0408">Iron</keyword>
<keyword id="KW-0456">Lyase</keyword>
<keyword id="KW-0479">Metal-binding</keyword>
<keyword id="KW-0627">Porphyrin biosynthesis</keyword>
<keyword id="KW-1185">Reference proteome</keyword>
<evidence type="ECO:0000255" key="1">
    <source>
        <dbReference type="HAMAP-Rule" id="MF_00323"/>
    </source>
</evidence>
<evidence type="ECO:0000305" key="2"/>
<comment type="function">
    <text evidence="1">Involved in coproporphyrin-dependent heme b biosynthesis. Catalyzes the insertion of ferrous iron into coproporphyrin III to form Fe-coproporphyrin III.</text>
</comment>
<comment type="catalytic activity">
    <reaction evidence="1">
        <text>Fe-coproporphyrin III + 2 H(+) = coproporphyrin III + Fe(2+)</text>
        <dbReference type="Rhea" id="RHEA:49572"/>
        <dbReference type="ChEBI" id="CHEBI:15378"/>
        <dbReference type="ChEBI" id="CHEBI:29033"/>
        <dbReference type="ChEBI" id="CHEBI:68438"/>
        <dbReference type="ChEBI" id="CHEBI:131725"/>
        <dbReference type="EC" id="4.99.1.9"/>
    </reaction>
    <physiologicalReaction direction="right-to-left" evidence="1">
        <dbReference type="Rhea" id="RHEA:49574"/>
    </physiologicalReaction>
</comment>
<comment type="pathway">
    <text evidence="1">Porphyrin-containing compound metabolism; protoheme biosynthesis.</text>
</comment>
<comment type="subcellular location">
    <subcellularLocation>
        <location evidence="1">Cytoplasm</location>
    </subcellularLocation>
</comment>
<comment type="similarity">
    <text evidence="1 2">Belongs to the ferrochelatase family.</text>
</comment>